<proteinExistence type="inferred from homology"/>
<comment type="function">
    <text evidence="1">During stationary phase, binds the chromosome non-specifically, forming a highly ordered and stable dps-DNA co-crystal within which chromosomal DNA is condensed and protected from diverse damages. It protects DNA from oxidative damage by sequestering intracellular Fe(2+) ion and storing it in the form of Fe(3+) oxyhydroxide mineral, which can be released after reduction. One hydrogen peroxide oxidizes two Fe(2+) ions, which prevents hydroxyl radical production by the Fenton reaction.</text>
</comment>
<comment type="catalytic activity">
    <reaction evidence="1">
        <text>2 Fe(2+) + H2O2 + 2 H(+) = 2 Fe(3+) + 2 H2O</text>
        <dbReference type="Rhea" id="RHEA:48712"/>
        <dbReference type="ChEBI" id="CHEBI:15377"/>
        <dbReference type="ChEBI" id="CHEBI:15378"/>
        <dbReference type="ChEBI" id="CHEBI:16240"/>
        <dbReference type="ChEBI" id="CHEBI:29033"/>
        <dbReference type="ChEBI" id="CHEBI:29034"/>
    </reaction>
</comment>
<comment type="subunit">
    <text evidence="1">Homododecamer. The 12 subunits form a hollow sphere into which the mineral iron core of up to 500 Fe(3+) can be deposited.</text>
</comment>
<comment type="subcellular location">
    <subcellularLocation>
        <location evidence="1">Cytoplasm</location>
    </subcellularLocation>
</comment>
<comment type="similarity">
    <text evidence="1">Belongs to the Dps family.</text>
</comment>
<name>DPS_YERPG</name>
<feature type="chain" id="PRO_1000145919" description="DNA protection during starvation protein">
    <location>
        <begin position="1"/>
        <end position="167"/>
    </location>
</feature>
<feature type="binding site" evidence="1">
    <location>
        <position position="51"/>
    </location>
    <ligand>
        <name>Fe cation</name>
        <dbReference type="ChEBI" id="CHEBI:24875"/>
    </ligand>
</feature>
<feature type="binding site" evidence="1">
    <location>
        <position position="78"/>
    </location>
    <ligand>
        <name>Fe cation</name>
        <dbReference type="ChEBI" id="CHEBI:24875"/>
    </ligand>
</feature>
<feature type="binding site" evidence="1">
    <location>
        <position position="82"/>
    </location>
    <ligand>
        <name>Fe cation</name>
        <dbReference type="ChEBI" id="CHEBI:24875"/>
    </ligand>
</feature>
<dbReference type="EC" id="1.16.-.-" evidence="1"/>
<dbReference type="EMBL" id="CP000901">
    <property type="protein sequence ID" value="ABX87396.1"/>
    <property type="molecule type" value="Genomic_DNA"/>
</dbReference>
<dbReference type="RefSeq" id="WP_002210233.1">
    <property type="nucleotide sequence ID" value="NZ_CP009935.1"/>
</dbReference>
<dbReference type="SMR" id="A9R6H6"/>
<dbReference type="GeneID" id="57976175"/>
<dbReference type="KEGG" id="ypg:YpAngola_A1771"/>
<dbReference type="PATRIC" id="fig|349746.12.peg.2745"/>
<dbReference type="GO" id="GO:0005737">
    <property type="term" value="C:cytoplasm"/>
    <property type="evidence" value="ECO:0007669"/>
    <property type="project" value="UniProtKB-SubCell"/>
</dbReference>
<dbReference type="GO" id="GO:0003677">
    <property type="term" value="F:DNA binding"/>
    <property type="evidence" value="ECO:0007669"/>
    <property type="project" value="UniProtKB-UniRule"/>
</dbReference>
<dbReference type="GO" id="GO:0008199">
    <property type="term" value="F:ferric iron binding"/>
    <property type="evidence" value="ECO:0007669"/>
    <property type="project" value="UniProtKB-UniRule"/>
</dbReference>
<dbReference type="GO" id="GO:0016722">
    <property type="term" value="F:oxidoreductase activity, acting on metal ions"/>
    <property type="evidence" value="ECO:0007669"/>
    <property type="project" value="InterPro"/>
</dbReference>
<dbReference type="GO" id="GO:0030261">
    <property type="term" value="P:chromosome condensation"/>
    <property type="evidence" value="ECO:0007669"/>
    <property type="project" value="UniProtKB-KW"/>
</dbReference>
<dbReference type="GO" id="GO:0006879">
    <property type="term" value="P:intracellular iron ion homeostasis"/>
    <property type="evidence" value="ECO:0007669"/>
    <property type="project" value="UniProtKB-KW"/>
</dbReference>
<dbReference type="CDD" id="cd01043">
    <property type="entry name" value="DPS"/>
    <property type="match status" value="1"/>
</dbReference>
<dbReference type="Gene3D" id="1.20.1260.10">
    <property type="match status" value="1"/>
</dbReference>
<dbReference type="HAMAP" id="MF_01441">
    <property type="entry name" value="Dps"/>
    <property type="match status" value="1"/>
</dbReference>
<dbReference type="InterPro" id="IPR002177">
    <property type="entry name" value="DPS_DNA-bd"/>
</dbReference>
<dbReference type="InterPro" id="IPR023188">
    <property type="entry name" value="DPS_DNA-bd_CS"/>
</dbReference>
<dbReference type="InterPro" id="IPR023067">
    <property type="entry name" value="Dps_gammaproteobac"/>
</dbReference>
<dbReference type="InterPro" id="IPR012347">
    <property type="entry name" value="Ferritin-like"/>
</dbReference>
<dbReference type="InterPro" id="IPR009078">
    <property type="entry name" value="Ferritin-like_SF"/>
</dbReference>
<dbReference type="InterPro" id="IPR008331">
    <property type="entry name" value="Ferritin_DPS_dom"/>
</dbReference>
<dbReference type="NCBIfam" id="NF006975">
    <property type="entry name" value="PRK09448.1"/>
    <property type="match status" value="1"/>
</dbReference>
<dbReference type="PANTHER" id="PTHR42932:SF3">
    <property type="entry name" value="DNA PROTECTION DURING STARVATION PROTEIN"/>
    <property type="match status" value="1"/>
</dbReference>
<dbReference type="PANTHER" id="PTHR42932">
    <property type="entry name" value="GENERAL STRESS PROTEIN 20U"/>
    <property type="match status" value="1"/>
</dbReference>
<dbReference type="Pfam" id="PF00210">
    <property type="entry name" value="Ferritin"/>
    <property type="match status" value="1"/>
</dbReference>
<dbReference type="PIRSF" id="PIRSF005900">
    <property type="entry name" value="Dps"/>
    <property type="match status" value="1"/>
</dbReference>
<dbReference type="PRINTS" id="PR01346">
    <property type="entry name" value="HELNAPAPROT"/>
</dbReference>
<dbReference type="SUPFAM" id="SSF47240">
    <property type="entry name" value="Ferritin-like"/>
    <property type="match status" value="1"/>
</dbReference>
<dbReference type="PROSITE" id="PS00818">
    <property type="entry name" value="DPS_1"/>
    <property type="match status" value="1"/>
</dbReference>
<evidence type="ECO:0000255" key="1">
    <source>
        <dbReference type="HAMAP-Rule" id="MF_01441"/>
    </source>
</evidence>
<organism>
    <name type="scientific">Yersinia pestis bv. Antiqua (strain Angola)</name>
    <dbReference type="NCBI Taxonomy" id="349746"/>
    <lineage>
        <taxon>Bacteria</taxon>
        <taxon>Pseudomonadati</taxon>
        <taxon>Pseudomonadota</taxon>
        <taxon>Gammaproteobacteria</taxon>
        <taxon>Enterobacterales</taxon>
        <taxon>Yersiniaceae</taxon>
        <taxon>Yersinia</taxon>
    </lineage>
</organism>
<reference key="1">
    <citation type="journal article" date="2010" name="J. Bacteriol.">
        <title>Genome sequence of the deep-rooted Yersinia pestis strain Angola reveals new insights into the evolution and pangenome of the plague bacterium.</title>
        <authorList>
            <person name="Eppinger M."/>
            <person name="Worsham P.L."/>
            <person name="Nikolich M.P."/>
            <person name="Riley D.R."/>
            <person name="Sebastian Y."/>
            <person name="Mou S."/>
            <person name="Achtman M."/>
            <person name="Lindler L.E."/>
            <person name="Ravel J."/>
        </authorList>
    </citation>
    <scope>NUCLEOTIDE SEQUENCE [LARGE SCALE GENOMIC DNA]</scope>
    <source>
        <strain>Angola</strain>
    </source>
</reference>
<gene>
    <name evidence="1" type="primary">dps</name>
    <name type="ordered locus">YpAngola_A1771</name>
</gene>
<accession>A9R6H6</accession>
<sequence>MSTAKLVKTKPSELLYTRNDVEEHVKVATIKRLNQMVIQFIDLSLITKQAHWNMRGANFVAVHEMLDGFRTALTDHLDTFAERAVQLGGVALGTAQVINDKTPLKSYPTNIHSVQEHLKALAERYAIVANDIRKAITEVEDENSADMFTAASRDLDKFLWFIESNIE</sequence>
<keyword id="KW-0963">Cytoplasm</keyword>
<keyword id="KW-0226">DNA condensation</keyword>
<keyword id="KW-0238">DNA-binding</keyword>
<keyword id="KW-0408">Iron</keyword>
<keyword id="KW-0409">Iron storage</keyword>
<keyword id="KW-0479">Metal-binding</keyword>
<keyword id="KW-0560">Oxidoreductase</keyword>
<protein>
    <recommendedName>
        <fullName evidence="1">DNA protection during starvation protein</fullName>
        <ecNumber evidence="1">1.16.-.-</ecNumber>
    </recommendedName>
</protein>